<sequence length="681" mass="75719">MNGKKLPDGGILFDETDDEDDDANLAATDTAEASRSVAGMDWNAGWKNESGLKGMDLIGEFVKHLPNSPGVYRMFNEAGDVLYVGKARSLKKRVGNYAQGRVHSNRIAQMVRFTTHMEFVTTRTETEALLLEANLIKRLRPRFNVLLRDDKSFPYILITADNRAPAIFKHRGARARKGDYFGPFASAGAVGRTINSLQRAFLIRTCTDSVFETRTRPCLLYQIKRCSGPCTHEVSDEGYAELVKEAKDFLSGKSQAVKTAIARQMNEASEDLDFERAAIYRDRLAALSHVQSHQGINPAGIEEADVFAIHHEGGISCIQVFFFRTGQNWGNRAYFPKADPSLPGSEILNAFLAQFYDDKPVPKQILLSETVEEQELLAAALGEKAGHKVTISVPQRGEKKDITDHVLANAREAHGRKLAETSSQARLLKGFAETFNLPYVPRRIEIYDNSHIMGTNAVGGMVVAGPEGFVKNQYRKFNIKSTDITPGDDFGMMREVMTRRFSRLLKEEGKPDRAQTPTPEEAADLPFPAWPDVILIDGGQGQMTAVRAILDELGIRDCVTAIGVAKGVDREAGRERFFADGRSDFSLPPRDPVLYFIQRMRDEAHRFAIGSHRARRKKEMVRNPLDEISGIGPGRKRSLLQHFGTAKAVSRAGLNDLMTVTGISETVARQIYNHFHESGSD</sequence>
<protein>
    <recommendedName>
        <fullName evidence="1">UvrABC system protein C</fullName>
        <shortName evidence="1">Protein UvrC</shortName>
    </recommendedName>
    <alternativeName>
        <fullName evidence="1">Excinuclease ABC subunit C</fullName>
    </alternativeName>
</protein>
<organism>
    <name type="scientific">Agrobacterium fabrum (strain C58 / ATCC 33970)</name>
    <name type="common">Agrobacterium tumefaciens (strain C58)</name>
    <dbReference type="NCBI Taxonomy" id="176299"/>
    <lineage>
        <taxon>Bacteria</taxon>
        <taxon>Pseudomonadati</taxon>
        <taxon>Pseudomonadota</taxon>
        <taxon>Alphaproteobacteria</taxon>
        <taxon>Hyphomicrobiales</taxon>
        <taxon>Rhizobiaceae</taxon>
        <taxon>Rhizobium/Agrobacterium group</taxon>
        <taxon>Agrobacterium</taxon>
        <taxon>Agrobacterium tumefaciens complex</taxon>
    </lineage>
</organism>
<accession>Q8UGA9</accession>
<accession>Q7CZX4</accession>
<keyword id="KW-0963">Cytoplasm</keyword>
<keyword id="KW-0227">DNA damage</keyword>
<keyword id="KW-0228">DNA excision</keyword>
<keyword id="KW-0234">DNA repair</keyword>
<keyword id="KW-0267">Excision nuclease</keyword>
<keyword id="KW-1185">Reference proteome</keyword>
<keyword id="KW-0742">SOS response</keyword>
<evidence type="ECO:0000255" key="1">
    <source>
        <dbReference type="HAMAP-Rule" id="MF_00203"/>
    </source>
</evidence>
<evidence type="ECO:0000256" key="2">
    <source>
        <dbReference type="SAM" id="MobiDB-lite"/>
    </source>
</evidence>
<evidence type="ECO:0000305" key="3"/>
<gene>
    <name evidence="1" type="primary">uvrC</name>
    <name type="ordered locus">Atu1129</name>
    <name type="ORF">AGR_C_2088</name>
</gene>
<dbReference type="EMBL" id="AE007869">
    <property type="protein sequence ID" value="AAK86932.2"/>
    <property type="status" value="ALT_INIT"/>
    <property type="molecule type" value="Genomic_DNA"/>
</dbReference>
<dbReference type="PIR" id="AH2715">
    <property type="entry name" value="AH2715"/>
</dbReference>
<dbReference type="PIR" id="C97497">
    <property type="entry name" value="C97497"/>
</dbReference>
<dbReference type="RefSeq" id="NP_354147.2">
    <property type="nucleotide sequence ID" value="NC_003062.2"/>
</dbReference>
<dbReference type="RefSeq" id="WP_035256491.1">
    <property type="nucleotide sequence ID" value="NC_003062.2"/>
</dbReference>
<dbReference type="SMR" id="Q8UGA9"/>
<dbReference type="STRING" id="176299.Atu1129"/>
<dbReference type="EnsemblBacteria" id="AAK86932">
    <property type="protein sequence ID" value="AAK86932"/>
    <property type="gene ID" value="Atu1129"/>
</dbReference>
<dbReference type="GeneID" id="1133167"/>
<dbReference type="KEGG" id="atu:Atu1129"/>
<dbReference type="PATRIC" id="fig|176299.10.peg.1146"/>
<dbReference type="eggNOG" id="COG0322">
    <property type="taxonomic scope" value="Bacteria"/>
</dbReference>
<dbReference type="HOGENOM" id="CLU_014841_3_0_5"/>
<dbReference type="OrthoDB" id="9804933at2"/>
<dbReference type="Proteomes" id="UP000000813">
    <property type="component" value="Chromosome circular"/>
</dbReference>
<dbReference type="GO" id="GO:0005737">
    <property type="term" value="C:cytoplasm"/>
    <property type="evidence" value="ECO:0007669"/>
    <property type="project" value="UniProtKB-SubCell"/>
</dbReference>
<dbReference type="GO" id="GO:0009380">
    <property type="term" value="C:excinuclease repair complex"/>
    <property type="evidence" value="ECO:0007669"/>
    <property type="project" value="InterPro"/>
</dbReference>
<dbReference type="GO" id="GO:0003677">
    <property type="term" value="F:DNA binding"/>
    <property type="evidence" value="ECO:0007669"/>
    <property type="project" value="UniProtKB-UniRule"/>
</dbReference>
<dbReference type="GO" id="GO:0009381">
    <property type="term" value="F:excinuclease ABC activity"/>
    <property type="evidence" value="ECO:0007669"/>
    <property type="project" value="UniProtKB-UniRule"/>
</dbReference>
<dbReference type="GO" id="GO:0006289">
    <property type="term" value="P:nucleotide-excision repair"/>
    <property type="evidence" value="ECO:0007669"/>
    <property type="project" value="UniProtKB-UniRule"/>
</dbReference>
<dbReference type="GO" id="GO:0009432">
    <property type="term" value="P:SOS response"/>
    <property type="evidence" value="ECO:0007669"/>
    <property type="project" value="UniProtKB-UniRule"/>
</dbReference>
<dbReference type="CDD" id="cd10434">
    <property type="entry name" value="GIY-YIG_UvrC_Cho"/>
    <property type="match status" value="1"/>
</dbReference>
<dbReference type="FunFam" id="3.30.420.340:FF:000001">
    <property type="entry name" value="UvrABC system protein C"/>
    <property type="match status" value="1"/>
</dbReference>
<dbReference type="FunFam" id="3.40.1440.10:FF:000001">
    <property type="entry name" value="UvrABC system protein C"/>
    <property type="match status" value="1"/>
</dbReference>
<dbReference type="Gene3D" id="1.10.150.20">
    <property type="entry name" value="5' to 3' exonuclease, C-terminal subdomain"/>
    <property type="match status" value="1"/>
</dbReference>
<dbReference type="Gene3D" id="3.40.1440.10">
    <property type="entry name" value="GIY-YIG endonuclease"/>
    <property type="match status" value="1"/>
</dbReference>
<dbReference type="Gene3D" id="4.10.860.10">
    <property type="entry name" value="UVR domain"/>
    <property type="match status" value="1"/>
</dbReference>
<dbReference type="Gene3D" id="3.30.420.340">
    <property type="entry name" value="UvrC, RNAse H endonuclease domain"/>
    <property type="match status" value="1"/>
</dbReference>
<dbReference type="HAMAP" id="MF_00203">
    <property type="entry name" value="UvrC"/>
    <property type="match status" value="1"/>
</dbReference>
<dbReference type="InterPro" id="IPR000305">
    <property type="entry name" value="GIY-YIG_endonuc"/>
</dbReference>
<dbReference type="InterPro" id="IPR035901">
    <property type="entry name" value="GIY-YIG_endonuc_sf"/>
</dbReference>
<dbReference type="InterPro" id="IPR047296">
    <property type="entry name" value="GIY-YIG_UvrC_Cho"/>
</dbReference>
<dbReference type="InterPro" id="IPR003583">
    <property type="entry name" value="Hlx-hairpin-Hlx_DNA-bd_motif"/>
</dbReference>
<dbReference type="InterPro" id="IPR010994">
    <property type="entry name" value="RuvA_2-like"/>
</dbReference>
<dbReference type="InterPro" id="IPR001943">
    <property type="entry name" value="UVR_dom"/>
</dbReference>
<dbReference type="InterPro" id="IPR036876">
    <property type="entry name" value="UVR_dom_sf"/>
</dbReference>
<dbReference type="InterPro" id="IPR050066">
    <property type="entry name" value="UvrABC_protein_C"/>
</dbReference>
<dbReference type="InterPro" id="IPR004791">
    <property type="entry name" value="UvrC"/>
</dbReference>
<dbReference type="InterPro" id="IPR001162">
    <property type="entry name" value="UvrC_RNase_H_dom"/>
</dbReference>
<dbReference type="InterPro" id="IPR038476">
    <property type="entry name" value="UvrC_RNase_H_dom_sf"/>
</dbReference>
<dbReference type="NCBIfam" id="NF001824">
    <property type="entry name" value="PRK00558.1-5"/>
    <property type="match status" value="1"/>
</dbReference>
<dbReference type="NCBIfam" id="TIGR00194">
    <property type="entry name" value="uvrC"/>
    <property type="match status" value="1"/>
</dbReference>
<dbReference type="PANTHER" id="PTHR30562:SF1">
    <property type="entry name" value="UVRABC SYSTEM PROTEIN C"/>
    <property type="match status" value="1"/>
</dbReference>
<dbReference type="PANTHER" id="PTHR30562">
    <property type="entry name" value="UVRC/OXIDOREDUCTASE"/>
    <property type="match status" value="1"/>
</dbReference>
<dbReference type="Pfam" id="PF01541">
    <property type="entry name" value="GIY-YIG"/>
    <property type="match status" value="1"/>
</dbReference>
<dbReference type="Pfam" id="PF14520">
    <property type="entry name" value="HHH_5"/>
    <property type="match status" value="1"/>
</dbReference>
<dbReference type="Pfam" id="PF02151">
    <property type="entry name" value="UVR"/>
    <property type="match status" value="1"/>
</dbReference>
<dbReference type="Pfam" id="PF22920">
    <property type="entry name" value="UvrC_RNaseH"/>
    <property type="match status" value="1"/>
</dbReference>
<dbReference type="Pfam" id="PF08459">
    <property type="entry name" value="UvrC_RNaseH_dom"/>
    <property type="match status" value="1"/>
</dbReference>
<dbReference type="SMART" id="SM00465">
    <property type="entry name" value="GIYc"/>
    <property type="match status" value="1"/>
</dbReference>
<dbReference type="SMART" id="SM00278">
    <property type="entry name" value="HhH1"/>
    <property type="match status" value="2"/>
</dbReference>
<dbReference type="SUPFAM" id="SSF46600">
    <property type="entry name" value="C-terminal UvrC-binding domain of UvrB"/>
    <property type="match status" value="1"/>
</dbReference>
<dbReference type="SUPFAM" id="SSF82771">
    <property type="entry name" value="GIY-YIG endonuclease"/>
    <property type="match status" value="1"/>
</dbReference>
<dbReference type="SUPFAM" id="SSF47781">
    <property type="entry name" value="RuvA domain 2-like"/>
    <property type="match status" value="1"/>
</dbReference>
<dbReference type="PROSITE" id="PS50164">
    <property type="entry name" value="GIY_YIG"/>
    <property type="match status" value="1"/>
</dbReference>
<dbReference type="PROSITE" id="PS50151">
    <property type="entry name" value="UVR"/>
    <property type="match status" value="1"/>
</dbReference>
<dbReference type="PROSITE" id="PS50165">
    <property type="entry name" value="UVRC"/>
    <property type="match status" value="1"/>
</dbReference>
<name>UVRC_AGRFC</name>
<feature type="chain" id="PRO_0000264860" description="UvrABC system protein C">
    <location>
        <begin position="1"/>
        <end position="681"/>
    </location>
</feature>
<feature type="domain" description="GIY-YIG" evidence="1">
    <location>
        <begin position="67"/>
        <end position="145"/>
    </location>
</feature>
<feature type="domain" description="UVR" evidence="1">
    <location>
        <begin position="255"/>
        <end position="290"/>
    </location>
</feature>
<feature type="region of interest" description="Disordered" evidence="2">
    <location>
        <begin position="1"/>
        <end position="23"/>
    </location>
</feature>
<feature type="compositionally biased region" description="Acidic residues" evidence="2">
    <location>
        <begin position="14"/>
        <end position="23"/>
    </location>
</feature>
<reference key="1">
    <citation type="journal article" date="2001" name="Science">
        <title>The genome of the natural genetic engineer Agrobacterium tumefaciens C58.</title>
        <authorList>
            <person name="Wood D.W."/>
            <person name="Setubal J.C."/>
            <person name="Kaul R."/>
            <person name="Monks D.E."/>
            <person name="Kitajima J.P."/>
            <person name="Okura V.K."/>
            <person name="Zhou Y."/>
            <person name="Chen L."/>
            <person name="Wood G.E."/>
            <person name="Almeida N.F. Jr."/>
            <person name="Woo L."/>
            <person name="Chen Y."/>
            <person name="Paulsen I.T."/>
            <person name="Eisen J.A."/>
            <person name="Karp P.D."/>
            <person name="Bovee D. Sr."/>
            <person name="Chapman P."/>
            <person name="Clendenning J."/>
            <person name="Deatherage G."/>
            <person name="Gillet W."/>
            <person name="Grant C."/>
            <person name="Kutyavin T."/>
            <person name="Levy R."/>
            <person name="Li M.-J."/>
            <person name="McClelland E."/>
            <person name="Palmieri A."/>
            <person name="Raymond C."/>
            <person name="Rouse G."/>
            <person name="Saenphimmachak C."/>
            <person name="Wu Z."/>
            <person name="Romero P."/>
            <person name="Gordon D."/>
            <person name="Zhang S."/>
            <person name="Yoo H."/>
            <person name="Tao Y."/>
            <person name="Biddle P."/>
            <person name="Jung M."/>
            <person name="Krespan W."/>
            <person name="Perry M."/>
            <person name="Gordon-Kamm B."/>
            <person name="Liao L."/>
            <person name="Kim S."/>
            <person name="Hendrick C."/>
            <person name="Zhao Z.-Y."/>
            <person name="Dolan M."/>
            <person name="Chumley F."/>
            <person name="Tingey S.V."/>
            <person name="Tomb J.-F."/>
            <person name="Gordon M.P."/>
            <person name="Olson M.V."/>
            <person name="Nester E.W."/>
        </authorList>
    </citation>
    <scope>NUCLEOTIDE SEQUENCE [LARGE SCALE GENOMIC DNA]</scope>
    <source>
        <strain>C58 / ATCC 33970</strain>
    </source>
</reference>
<reference key="2">
    <citation type="journal article" date="2001" name="Science">
        <title>Genome sequence of the plant pathogen and biotechnology agent Agrobacterium tumefaciens C58.</title>
        <authorList>
            <person name="Goodner B."/>
            <person name="Hinkle G."/>
            <person name="Gattung S."/>
            <person name="Miller N."/>
            <person name="Blanchard M."/>
            <person name="Qurollo B."/>
            <person name="Goldman B.S."/>
            <person name="Cao Y."/>
            <person name="Askenazi M."/>
            <person name="Halling C."/>
            <person name="Mullin L."/>
            <person name="Houmiel K."/>
            <person name="Gordon J."/>
            <person name="Vaudin M."/>
            <person name="Iartchouk O."/>
            <person name="Epp A."/>
            <person name="Liu F."/>
            <person name="Wollam C."/>
            <person name="Allinger M."/>
            <person name="Doughty D."/>
            <person name="Scott C."/>
            <person name="Lappas C."/>
            <person name="Markelz B."/>
            <person name="Flanagan C."/>
            <person name="Crowell C."/>
            <person name="Gurson J."/>
            <person name="Lomo C."/>
            <person name="Sear C."/>
            <person name="Strub G."/>
            <person name="Cielo C."/>
            <person name="Slater S."/>
        </authorList>
    </citation>
    <scope>NUCLEOTIDE SEQUENCE [LARGE SCALE GENOMIC DNA]</scope>
    <source>
        <strain>C58 / ATCC 33970</strain>
    </source>
</reference>
<comment type="function">
    <text evidence="1">The UvrABC repair system catalyzes the recognition and processing of DNA lesions. UvrC both incises the 5' and 3' sides of the lesion. The N-terminal half is responsible for the 3' incision and the C-terminal half is responsible for the 5' incision.</text>
</comment>
<comment type="subunit">
    <text evidence="1">Interacts with UvrB in an incision complex.</text>
</comment>
<comment type="subcellular location">
    <subcellularLocation>
        <location evidence="1">Cytoplasm</location>
    </subcellularLocation>
</comment>
<comment type="similarity">
    <text evidence="1">Belongs to the UvrC family.</text>
</comment>
<comment type="sequence caution" evidence="3">
    <conflict type="erroneous initiation">
        <sequence resource="EMBL-CDS" id="AAK86932"/>
    </conflict>
</comment>
<proteinExistence type="inferred from homology"/>